<keyword id="KW-1185">Reference proteome</keyword>
<keyword id="KW-0687">Ribonucleoprotein</keyword>
<keyword id="KW-0689">Ribosomal protein</keyword>
<keyword id="KW-0694">RNA-binding</keyword>
<keyword id="KW-0699">rRNA-binding</keyword>
<accession>Q8TIN5</accession>
<comment type="subunit">
    <text evidence="1">Part of the 50S ribosomal subunit. Binds 23S rRNA.</text>
</comment>
<comment type="similarity">
    <text evidence="1">Belongs to the eukaryotic ribosomal protein eL20 family.</text>
</comment>
<evidence type="ECO:0000255" key="1">
    <source>
        <dbReference type="HAMAP-Rule" id="MF_00273"/>
    </source>
</evidence>
<evidence type="ECO:0000305" key="2"/>
<reference key="1">
    <citation type="journal article" date="2002" name="Genome Res.">
        <title>The genome of Methanosarcina acetivorans reveals extensive metabolic and physiological diversity.</title>
        <authorList>
            <person name="Galagan J.E."/>
            <person name="Nusbaum C."/>
            <person name="Roy A."/>
            <person name="Endrizzi M.G."/>
            <person name="Macdonald P."/>
            <person name="FitzHugh W."/>
            <person name="Calvo S."/>
            <person name="Engels R."/>
            <person name="Smirnov S."/>
            <person name="Atnoor D."/>
            <person name="Brown A."/>
            <person name="Allen N."/>
            <person name="Naylor J."/>
            <person name="Stange-Thomann N."/>
            <person name="DeArellano K."/>
            <person name="Johnson R."/>
            <person name="Linton L."/>
            <person name="McEwan P."/>
            <person name="McKernan K."/>
            <person name="Talamas J."/>
            <person name="Tirrell A."/>
            <person name="Ye W."/>
            <person name="Zimmer A."/>
            <person name="Barber R.D."/>
            <person name="Cann I."/>
            <person name="Graham D.E."/>
            <person name="Grahame D.A."/>
            <person name="Guss A.M."/>
            <person name="Hedderich R."/>
            <person name="Ingram-Smith C."/>
            <person name="Kuettner H.C."/>
            <person name="Krzycki J.A."/>
            <person name="Leigh J.A."/>
            <person name="Li W."/>
            <person name="Liu J."/>
            <person name="Mukhopadhyay B."/>
            <person name="Reeve J.N."/>
            <person name="Smith K."/>
            <person name="Springer T.A."/>
            <person name="Umayam L.A."/>
            <person name="White O."/>
            <person name="White R.H."/>
            <person name="de Macario E.C."/>
            <person name="Ferry J.G."/>
            <person name="Jarrell K.F."/>
            <person name="Jing H."/>
            <person name="Macario A.J.L."/>
            <person name="Paulsen I.T."/>
            <person name="Pritchett M."/>
            <person name="Sowers K.R."/>
            <person name="Swanson R.V."/>
            <person name="Zinder S.H."/>
            <person name="Lander E."/>
            <person name="Metcalf W.W."/>
            <person name="Birren B."/>
        </authorList>
    </citation>
    <scope>NUCLEOTIDE SEQUENCE [LARGE SCALE GENOMIC DNA]</scope>
    <source>
        <strain>ATCC 35395 / DSM 2834 / JCM 12185 / C2A</strain>
    </source>
</reference>
<name>RL18A_METAC</name>
<gene>
    <name evidence="1" type="primary">rpl18a</name>
    <name evidence="1" type="synonym">rpl20e</name>
    <name evidence="1" type="synonym">rplX</name>
    <name type="ordered locus">MA_4111</name>
</gene>
<dbReference type="EMBL" id="AE010299">
    <property type="protein sequence ID" value="AAM07459.1"/>
    <property type="molecule type" value="Genomic_DNA"/>
</dbReference>
<dbReference type="SMR" id="Q8TIN5"/>
<dbReference type="STRING" id="188937.MA_4111"/>
<dbReference type="EnsemblBacteria" id="AAM07459">
    <property type="protein sequence ID" value="AAM07459"/>
    <property type="gene ID" value="MA_4111"/>
</dbReference>
<dbReference type="KEGG" id="mac:MA_4111"/>
<dbReference type="HOGENOM" id="CLU_177460_1_1_2"/>
<dbReference type="InParanoid" id="Q8TIN5"/>
<dbReference type="OrthoDB" id="191241at2157"/>
<dbReference type="PhylomeDB" id="Q8TIN5"/>
<dbReference type="Proteomes" id="UP000002487">
    <property type="component" value="Chromosome"/>
</dbReference>
<dbReference type="GO" id="GO:1990904">
    <property type="term" value="C:ribonucleoprotein complex"/>
    <property type="evidence" value="ECO:0007669"/>
    <property type="project" value="UniProtKB-KW"/>
</dbReference>
<dbReference type="GO" id="GO:0005840">
    <property type="term" value="C:ribosome"/>
    <property type="evidence" value="ECO:0007669"/>
    <property type="project" value="UniProtKB-KW"/>
</dbReference>
<dbReference type="GO" id="GO:0070180">
    <property type="term" value="F:large ribosomal subunit rRNA binding"/>
    <property type="evidence" value="ECO:0007669"/>
    <property type="project" value="UniProtKB-UniRule"/>
</dbReference>
<dbReference type="GO" id="GO:0003735">
    <property type="term" value="F:structural constituent of ribosome"/>
    <property type="evidence" value="ECO:0007669"/>
    <property type="project" value="InterPro"/>
</dbReference>
<dbReference type="GO" id="GO:0006412">
    <property type="term" value="P:translation"/>
    <property type="evidence" value="ECO:0007669"/>
    <property type="project" value="UniProtKB-UniRule"/>
</dbReference>
<dbReference type="Gene3D" id="3.10.20.10">
    <property type="match status" value="1"/>
</dbReference>
<dbReference type="HAMAP" id="MF_00273">
    <property type="entry name" value="Ribosomal_eL20"/>
    <property type="match status" value="1"/>
</dbReference>
<dbReference type="InterPro" id="IPR028877">
    <property type="entry name" value="Ribosomal_eL20"/>
</dbReference>
<dbReference type="InterPro" id="IPR023573">
    <property type="entry name" value="Ribosomal_eL20_dom"/>
</dbReference>
<dbReference type="NCBIfam" id="NF001981">
    <property type="entry name" value="PRK00773.1-1"/>
    <property type="match status" value="1"/>
</dbReference>
<dbReference type="Pfam" id="PF01775">
    <property type="entry name" value="Ribosomal_L18A"/>
    <property type="match status" value="1"/>
</dbReference>
<dbReference type="SUPFAM" id="SSF160374">
    <property type="entry name" value="RplX-like"/>
    <property type="match status" value="1"/>
</dbReference>
<organism>
    <name type="scientific">Methanosarcina acetivorans (strain ATCC 35395 / DSM 2834 / JCM 12185 / C2A)</name>
    <dbReference type="NCBI Taxonomy" id="188937"/>
    <lineage>
        <taxon>Archaea</taxon>
        <taxon>Methanobacteriati</taxon>
        <taxon>Methanobacteriota</taxon>
        <taxon>Stenosarchaea group</taxon>
        <taxon>Methanomicrobia</taxon>
        <taxon>Methanosarcinales</taxon>
        <taxon>Methanosarcinaceae</taxon>
        <taxon>Methanosarcina</taxon>
    </lineage>
</organism>
<sequence>MVMMKSFIVKGKFKAGSTWEKFTKKIESQNEKNATDKTYSIFGSKHGVKRSQVQIESVAEE</sequence>
<proteinExistence type="inferred from homology"/>
<protein>
    <recommendedName>
        <fullName evidence="1">Large ribosomal subunit protein eL20</fullName>
    </recommendedName>
    <alternativeName>
        <fullName evidence="2">50S ribosomal protein L18Ae</fullName>
    </alternativeName>
    <alternativeName>
        <fullName evidence="1">50S ribosomal protein L20e</fullName>
    </alternativeName>
    <alternativeName>
        <fullName evidence="1">50S ribosomal protein LX</fullName>
    </alternativeName>
</protein>
<feature type="chain" id="PRO_0000153697" description="Large ribosomal subunit protein eL20">
    <location>
        <begin position="1"/>
        <end position="61"/>
    </location>
</feature>